<comment type="similarity">
    <text evidence="2">Belongs to the UPF0758 family.</text>
</comment>
<feature type="chain" id="PRO_1000001669" description="UPF0758 protein NMC1174">
    <location>
        <begin position="1"/>
        <end position="225"/>
    </location>
</feature>
<feature type="domain" description="MPN" evidence="1">
    <location>
        <begin position="102"/>
        <end position="224"/>
    </location>
</feature>
<feature type="short sequence motif" description="JAMM motif" evidence="1">
    <location>
        <begin position="173"/>
        <end position="186"/>
    </location>
</feature>
<feature type="binding site" evidence="1">
    <location>
        <position position="173"/>
    </location>
    <ligand>
        <name>Zn(2+)</name>
        <dbReference type="ChEBI" id="CHEBI:29105"/>
        <note>catalytic</note>
    </ligand>
</feature>
<feature type="binding site" evidence="1">
    <location>
        <position position="175"/>
    </location>
    <ligand>
        <name>Zn(2+)</name>
        <dbReference type="ChEBI" id="CHEBI:29105"/>
        <note>catalytic</note>
    </ligand>
</feature>
<feature type="binding site" evidence="1">
    <location>
        <position position="186"/>
    </location>
    <ligand>
        <name>Zn(2+)</name>
        <dbReference type="ChEBI" id="CHEBI:29105"/>
        <note>catalytic</note>
    </ligand>
</feature>
<name>Y1174_NEIMF</name>
<organism>
    <name type="scientific">Neisseria meningitidis serogroup C / serotype 2a (strain ATCC 700532 / DSM 15464 / FAM18)</name>
    <dbReference type="NCBI Taxonomy" id="272831"/>
    <lineage>
        <taxon>Bacteria</taxon>
        <taxon>Pseudomonadati</taxon>
        <taxon>Pseudomonadota</taxon>
        <taxon>Betaproteobacteria</taxon>
        <taxon>Neisseriales</taxon>
        <taxon>Neisseriaceae</taxon>
        <taxon>Neisseria</taxon>
    </lineage>
</organism>
<proteinExistence type="inferred from homology"/>
<evidence type="ECO:0000255" key="1">
    <source>
        <dbReference type="PROSITE-ProRule" id="PRU01182"/>
    </source>
</evidence>
<evidence type="ECO:0000305" key="2"/>
<accession>A1KU78</accession>
<protein>
    <recommendedName>
        <fullName>UPF0758 protein NMC1174</fullName>
    </recommendedName>
</protein>
<reference key="1">
    <citation type="journal article" date="2007" name="PLoS Genet.">
        <title>Meningococcal genetic variation mechanisms viewed through comparative analysis of serogroup C strain FAM18.</title>
        <authorList>
            <person name="Bentley S.D."/>
            <person name="Vernikos G.S."/>
            <person name="Snyder L.A.S."/>
            <person name="Churcher C."/>
            <person name="Arrowsmith C."/>
            <person name="Chillingworth T."/>
            <person name="Cronin A."/>
            <person name="Davis P.H."/>
            <person name="Holroyd N.E."/>
            <person name="Jagels K."/>
            <person name="Maddison M."/>
            <person name="Moule S."/>
            <person name="Rabbinowitsch E."/>
            <person name="Sharp S."/>
            <person name="Unwin L."/>
            <person name="Whitehead S."/>
            <person name="Quail M.A."/>
            <person name="Achtman M."/>
            <person name="Barrell B.G."/>
            <person name="Saunders N.J."/>
            <person name="Parkhill J."/>
        </authorList>
    </citation>
    <scope>NUCLEOTIDE SEQUENCE [LARGE SCALE GENOMIC DNA]</scope>
    <source>
        <strain>ATCC 700532 / DSM 15464 / FAM18</strain>
    </source>
</reference>
<keyword id="KW-0378">Hydrolase</keyword>
<keyword id="KW-0479">Metal-binding</keyword>
<keyword id="KW-0482">Metalloprotease</keyword>
<keyword id="KW-0645">Protease</keyword>
<keyword id="KW-0862">Zinc</keyword>
<gene>
    <name type="ordered locus">NMC1174</name>
</gene>
<dbReference type="EMBL" id="AM421808">
    <property type="protein sequence ID" value="CAM10420.1"/>
    <property type="molecule type" value="Genomic_DNA"/>
</dbReference>
<dbReference type="SMR" id="A1KU78"/>
<dbReference type="KEGG" id="nmc:NMC1174"/>
<dbReference type="HOGENOM" id="CLU_073529_0_1_4"/>
<dbReference type="Proteomes" id="UP000002286">
    <property type="component" value="Chromosome"/>
</dbReference>
<dbReference type="GO" id="GO:0046872">
    <property type="term" value="F:metal ion binding"/>
    <property type="evidence" value="ECO:0007669"/>
    <property type="project" value="UniProtKB-KW"/>
</dbReference>
<dbReference type="GO" id="GO:0008237">
    <property type="term" value="F:metallopeptidase activity"/>
    <property type="evidence" value="ECO:0007669"/>
    <property type="project" value="UniProtKB-KW"/>
</dbReference>
<dbReference type="GO" id="GO:0006508">
    <property type="term" value="P:proteolysis"/>
    <property type="evidence" value="ECO:0007669"/>
    <property type="project" value="UniProtKB-KW"/>
</dbReference>
<dbReference type="CDD" id="cd08071">
    <property type="entry name" value="MPN_DUF2466"/>
    <property type="match status" value="1"/>
</dbReference>
<dbReference type="Gene3D" id="3.40.140.10">
    <property type="entry name" value="Cytidine Deaminase, domain 2"/>
    <property type="match status" value="1"/>
</dbReference>
<dbReference type="InterPro" id="IPR037518">
    <property type="entry name" value="MPN"/>
</dbReference>
<dbReference type="InterPro" id="IPR025657">
    <property type="entry name" value="RadC_JAB"/>
</dbReference>
<dbReference type="InterPro" id="IPR010994">
    <property type="entry name" value="RuvA_2-like"/>
</dbReference>
<dbReference type="InterPro" id="IPR001405">
    <property type="entry name" value="UPF0758"/>
</dbReference>
<dbReference type="InterPro" id="IPR046778">
    <property type="entry name" value="UPF0758_N"/>
</dbReference>
<dbReference type="NCBIfam" id="NF000642">
    <property type="entry name" value="PRK00024.1"/>
    <property type="match status" value="1"/>
</dbReference>
<dbReference type="NCBIfam" id="TIGR00608">
    <property type="entry name" value="radc"/>
    <property type="match status" value="1"/>
</dbReference>
<dbReference type="PANTHER" id="PTHR30471">
    <property type="entry name" value="DNA REPAIR PROTEIN RADC"/>
    <property type="match status" value="1"/>
</dbReference>
<dbReference type="PANTHER" id="PTHR30471:SF3">
    <property type="entry name" value="UPF0758 PROTEIN YEES-RELATED"/>
    <property type="match status" value="1"/>
</dbReference>
<dbReference type="Pfam" id="PF04002">
    <property type="entry name" value="RadC"/>
    <property type="match status" value="1"/>
</dbReference>
<dbReference type="Pfam" id="PF20582">
    <property type="entry name" value="UPF0758_N"/>
    <property type="match status" value="1"/>
</dbReference>
<dbReference type="SUPFAM" id="SSF102712">
    <property type="entry name" value="JAB1/MPN domain"/>
    <property type="match status" value="1"/>
</dbReference>
<dbReference type="SUPFAM" id="SSF47781">
    <property type="entry name" value="RuvA domain 2-like"/>
    <property type="match status" value="1"/>
</dbReference>
<dbReference type="PROSITE" id="PS50249">
    <property type="entry name" value="MPN"/>
    <property type="match status" value="1"/>
</dbReference>
<sequence>MSIKQWPEGERPREKLLERGAAALSDAELLAILLRVGTRGMSAVDLARYLLQEFGSLGRLMSAEVGKLSAYKGMGTASFTQFAVVREIGRRILAEELQESIVLSDPDTVADYLRFHLGQEKVEVSVALLLNRQNQLIAVRELSRGTVAENTIYIREIVKLALDEYADSLIIAHNHPGGSPEPSQEDIMFTRRLAQAMSLVDVSLLDHFIVTSQSVRSFRQLGLMP</sequence>